<name>PRPB_AERPE</name>
<accession>Q9YFM7</accession>
<comment type="function">
    <text evidence="1">Involved in the catabolism of short chain fatty acids (SCFA) via the 2-methylcitrate cycle I (propionate degradation route). Catalyzes the thermodynamically favored C-C bond cleavage of (2R,3S)-2-methylisocitrate to yield pyruvate and succinate via an alpha-carboxy-carbanion intermediate.</text>
</comment>
<comment type="catalytic activity">
    <reaction evidence="1">
        <text>(2S,3R)-3-hydroxybutane-1,2,3-tricarboxylate = pyruvate + succinate</text>
        <dbReference type="Rhea" id="RHEA:16809"/>
        <dbReference type="ChEBI" id="CHEBI:15361"/>
        <dbReference type="ChEBI" id="CHEBI:30031"/>
        <dbReference type="ChEBI" id="CHEBI:57429"/>
        <dbReference type="EC" id="4.1.3.30"/>
    </reaction>
</comment>
<comment type="cofactor">
    <cofactor evidence="1">
        <name>Mg(2+)</name>
        <dbReference type="ChEBI" id="CHEBI:18420"/>
    </cofactor>
</comment>
<comment type="pathway">
    <text evidence="1">Organic acid metabolism; propanoate degradation.</text>
</comment>
<comment type="subunit">
    <text evidence="1">Homotetramer; dimer of dimers.</text>
</comment>
<comment type="similarity">
    <text evidence="1">Belongs to the isocitrate lyase/PEP mutase superfamily. Methylisocitrate lyase family.</text>
</comment>
<dbReference type="EC" id="4.1.3.30" evidence="1"/>
<dbReference type="EMBL" id="BA000002">
    <property type="protein sequence ID" value="BAA79134.2"/>
    <property type="molecule type" value="Genomic_DNA"/>
</dbReference>
<dbReference type="PIR" id="D72779">
    <property type="entry name" value="D72779"/>
</dbReference>
<dbReference type="RefSeq" id="WP_010865580.1">
    <property type="nucleotide sequence ID" value="NC_000854.2"/>
</dbReference>
<dbReference type="SMR" id="Q9YFM7"/>
<dbReference type="STRING" id="272557.APE_0222.1"/>
<dbReference type="EnsemblBacteria" id="BAA79134">
    <property type="protein sequence ID" value="BAA79134"/>
    <property type="gene ID" value="APE_0222.1"/>
</dbReference>
<dbReference type="GeneID" id="1445741"/>
<dbReference type="KEGG" id="ape:APE_0222.1"/>
<dbReference type="PATRIC" id="fig|272557.25.peg.159"/>
<dbReference type="eggNOG" id="arCOG00581">
    <property type="taxonomic scope" value="Archaea"/>
</dbReference>
<dbReference type="UniPathway" id="UPA00946"/>
<dbReference type="Proteomes" id="UP000002518">
    <property type="component" value="Chromosome"/>
</dbReference>
<dbReference type="GO" id="GO:0000287">
    <property type="term" value="F:magnesium ion binding"/>
    <property type="evidence" value="ECO:0007669"/>
    <property type="project" value="UniProtKB-UniRule"/>
</dbReference>
<dbReference type="GO" id="GO:0046421">
    <property type="term" value="F:methylisocitrate lyase activity"/>
    <property type="evidence" value="ECO:0007669"/>
    <property type="project" value="UniProtKB-UniRule"/>
</dbReference>
<dbReference type="GO" id="GO:0019629">
    <property type="term" value="P:propionate catabolic process, 2-methylcitrate cycle"/>
    <property type="evidence" value="ECO:0007669"/>
    <property type="project" value="UniProtKB-UniRule"/>
</dbReference>
<dbReference type="CDD" id="cd00377">
    <property type="entry name" value="ICL_PEPM"/>
    <property type="match status" value="1"/>
</dbReference>
<dbReference type="FunFam" id="3.20.20.60:FF:000009">
    <property type="entry name" value="2-methylisocitrate lyase"/>
    <property type="match status" value="1"/>
</dbReference>
<dbReference type="Gene3D" id="3.20.20.60">
    <property type="entry name" value="Phosphoenolpyruvate-binding domains"/>
    <property type="match status" value="1"/>
</dbReference>
<dbReference type="HAMAP" id="MF_01939">
    <property type="entry name" value="PrpB"/>
    <property type="match status" value="1"/>
</dbReference>
<dbReference type="InterPro" id="IPR039556">
    <property type="entry name" value="ICL/PEPM"/>
</dbReference>
<dbReference type="InterPro" id="IPR018523">
    <property type="entry name" value="Isocitrate_lyase_ph_CS"/>
</dbReference>
<dbReference type="InterPro" id="IPR012695">
    <property type="entry name" value="PrpB"/>
</dbReference>
<dbReference type="InterPro" id="IPR015813">
    <property type="entry name" value="Pyrv/PenolPyrv_kinase-like_dom"/>
</dbReference>
<dbReference type="InterPro" id="IPR040442">
    <property type="entry name" value="Pyrv_kinase-like_dom_sf"/>
</dbReference>
<dbReference type="NCBIfam" id="TIGR02317">
    <property type="entry name" value="prpB"/>
    <property type="match status" value="1"/>
</dbReference>
<dbReference type="PANTHER" id="PTHR42905:SF5">
    <property type="entry name" value="CARBOXYVINYL-CARBOXYPHOSPHONATE PHOSPHORYLMUTASE, CHLOROPLASTIC"/>
    <property type="match status" value="1"/>
</dbReference>
<dbReference type="PANTHER" id="PTHR42905">
    <property type="entry name" value="PHOSPHOENOLPYRUVATE CARBOXYLASE"/>
    <property type="match status" value="1"/>
</dbReference>
<dbReference type="Pfam" id="PF13714">
    <property type="entry name" value="PEP_mutase"/>
    <property type="match status" value="1"/>
</dbReference>
<dbReference type="SUPFAM" id="SSF51621">
    <property type="entry name" value="Phosphoenolpyruvate/pyruvate domain"/>
    <property type="match status" value="1"/>
</dbReference>
<dbReference type="PROSITE" id="PS00161">
    <property type="entry name" value="ISOCITRATE_LYASE"/>
    <property type="match status" value="1"/>
</dbReference>
<feature type="chain" id="PRO_0000068821" description="2-methylisocitrate lyase">
    <location>
        <begin position="1"/>
        <end position="308"/>
    </location>
</feature>
<feature type="binding site" evidence="1">
    <location>
        <begin position="51"/>
        <end position="53"/>
    </location>
    <ligand>
        <name>substrate</name>
    </ligand>
</feature>
<feature type="binding site" evidence="1">
    <location>
        <position position="90"/>
    </location>
    <ligand>
        <name>Mg(2+)</name>
        <dbReference type="ChEBI" id="CHEBI:18420"/>
    </ligand>
</feature>
<feature type="binding site" evidence="1">
    <location>
        <position position="92"/>
    </location>
    <ligand>
        <name>Mg(2+)</name>
        <dbReference type="ChEBI" id="CHEBI:18420"/>
    </ligand>
</feature>
<feature type="binding site" evidence="1">
    <location>
        <begin position="127"/>
        <end position="128"/>
    </location>
    <ligand>
        <name>substrate</name>
    </ligand>
</feature>
<feature type="binding site" evidence="1">
    <location>
        <position position="160"/>
    </location>
    <ligand>
        <name>substrate</name>
    </ligand>
</feature>
<feature type="binding site" evidence="1">
    <location>
        <position position="190"/>
    </location>
    <ligand>
        <name>substrate</name>
    </ligand>
</feature>
<feature type="binding site" evidence="1">
    <location>
        <begin position="212"/>
        <end position="214"/>
    </location>
    <ligand>
        <name>substrate</name>
    </ligand>
</feature>
<feature type="binding site" evidence="1">
    <location>
        <position position="243"/>
    </location>
    <ligand>
        <name>substrate</name>
    </ligand>
</feature>
<feature type="binding site" evidence="1">
    <location>
        <position position="272"/>
    </location>
    <ligand>
        <name>substrate</name>
    </ligand>
</feature>
<evidence type="ECO:0000255" key="1">
    <source>
        <dbReference type="HAMAP-Rule" id="MF_01939"/>
    </source>
</evidence>
<organism>
    <name type="scientific">Aeropyrum pernix (strain ATCC 700893 / DSM 11879 / JCM 9820 / NBRC 100138 / K1)</name>
    <dbReference type="NCBI Taxonomy" id="272557"/>
    <lineage>
        <taxon>Archaea</taxon>
        <taxon>Thermoproteota</taxon>
        <taxon>Thermoprotei</taxon>
        <taxon>Desulfurococcales</taxon>
        <taxon>Desulfurococcaceae</taxon>
        <taxon>Aeropyrum</taxon>
    </lineage>
</organism>
<keyword id="KW-0456">Lyase</keyword>
<keyword id="KW-0460">Magnesium</keyword>
<keyword id="KW-0479">Metal-binding</keyword>
<keyword id="KW-1185">Reference proteome</keyword>
<sequence>MAFLYREPLERPGLVLRELIEKRDIVVAPGVYNPAVALLAERMGFEALYLSGAAITGSLAMPDLGLITLSELAMFTSYITRVVRVPVIVDADTGFGEAINVERTVRELERAGAAAIQIEDQVMPKKCGHLQGKALISPEDMVKKIIAAVGARRDALIVARTDARGVEGFEKAVERAQLYVEAGADIIFPEALTSLEEFREFARRVKAPLLANMTEFGKTPYITVDQFREAGYKIVIFPVTTFRASLKASETVLREIMEKGTQKDILDKLYTRTEFYDLIGYHDYEKRDAEVSRKAEELLARHNNSRTG</sequence>
<reference key="1">
    <citation type="journal article" date="1999" name="DNA Res.">
        <title>Complete genome sequence of an aerobic hyper-thermophilic crenarchaeon, Aeropyrum pernix K1.</title>
        <authorList>
            <person name="Kawarabayasi Y."/>
            <person name="Hino Y."/>
            <person name="Horikawa H."/>
            <person name="Yamazaki S."/>
            <person name="Haikawa Y."/>
            <person name="Jin-no K."/>
            <person name="Takahashi M."/>
            <person name="Sekine M."/>
            <person name="Baba S."/>
            <person name="Ankai A."/>
            <person name="Kosugi H."/>
            <person name="Hosoyama A."/>
            <person name="Fukui S."/>
            <person name="Nagai Y."/>
            <person name="Nishijima K."/>
            <person name="Nakazawa H."/>
            <person name="Takamiya M."/>
            <person name="Masuda S."/>
            <person name="Funahashi T."/>
            <person name="Tanaka T."/>
            <person name="Kudoh Y."/>
            <person name="Yamazaki J."/>
            <person name="Kushida N."/>
            <person name="Oguchi A."/>
            <person name="Aoki K."/>
            <person name="Kubota K."/>
            <person name="Nakamura Y."/>
            <person name="Nomura N."/>
            <person name="Sako Y."/>
            <person name="Kikuchi H."/>
        </authorList>
    </citation>
    <scope>NUCLEOTIDE SEQUENCE [LARGE SCALE GENOMIC DNA]</scope>
    <source>
        <strain>ATCC 700893 / DSM 11879 / JCM 9820 / NBRC 100138 / K1</strain>
    </source>
</reference>
<gene>
    <name evidence="1" type="primary">prpB</name>
    <name type="ordered locus">APE_0222.1</name>
</gene>
<proteinExistence type="inferred from homology"/>
<protein>
    <recommendedName>
        <fullName evidence="1">2-methylisocitrate lyase</fullName>
        <shortName evidence="1">2-MIC</shortName>
        <shortName evidence="1">MICL</shortName>
        <ecNumber evidence="1">4.1.3.30</ecNumber>
    </recommendedName>
    <alternativeName>
        <fullName evidence="1">(2R,3S)-2-methylisocitrate lyase</fullName>
    </alternativeName>
</protein>